<keyword id="KW-0004">4Fe-4S</keyword>
<keyword id="KW-0408">Iron</keyword>
<keyword id="KW-0411">Iron-sulfur</keyword>
<keyword id="KW-0414">Isoprene biosynthesis</keyword>
<keyword id="KW-0479">Metal-binding</keyword>
<keyword id="KW-0560">Oxidoreductase</keyword>
<proteinExistence type="inferred from homology"/>
<protein>
    <recommendedName>
        <fullName evidence="1">4-hydroxy-3-methylbut-2-en-1-yl diphosphate synthase (flavodoxin)</fullName>
        <ecNumber evidence="1">1.17.7.3</ecNumber>
    </recommendedName>
    <alternativeName>
        <fullName evidence="1">1-hydroxy-2-methyl-2-(E)-butenyl 4-diphosphate synthase</fullName>
    </alternativeName>
</protein>
<dbReference type="EC" id="1.17.7.3" evidence="1"/>
<dbReference type="EMBL" id="U67933">
    <property type="protein sequence ID" value="AAB51469.1"/>
    <property type="molecule type" value="Genomic_DNA"/>
</dbReference>
<dbReference type="SMR" id="P72241"/>
<dbReference type="STRING" id="588.BGK56_06295"/>
<dbReference type="UniPathway" id="UPA00056">
    <property type="reaction ID" value="UER00096"/>
</dbReference>
<dbReference type="GO" id="GO:0051539">
    <property type="term" value="F:4 iron, 4 sulfur cluster binding"/>
    <property type="evidence" value="ECO:0007669"/>
    <property type="project" value="UniProtKB-UniRule"/>
</dbReference>
<dbReference type="GO" id="GO:0046429">
    <property type="term" value="F:4-hydroxy-3-methylbut-2-en-1-yl diphosphate synthase activity (ferredoxin)"/>
    <property type="evidence" value="ECO:0007669"/>
    <property type="project" value="UniProtKB-UniRule"/>
</dbReference>
<dbReference type="GO" id="GO:0141197">
    <property type="term" value="F:4-hydroxy-3-methylbut-2-enyl-diphosphate synthase activity (flavodoxin)"/>
    <property type="evidence" value="ECO:0007669"/>
    <property type="project" value="UniProtKB-EC"/>
</dbReference>
<dbReference type="GO" id="GO:0005506">
    <property type="term" value="F:iron ion binding"/>
    <property type="evidence" value="ECO:0007669"/>
    <property type="project" value="InterPro"/>
</dbReference>
<dbReference type="GO" id="GO:0019288">
    <property type="term" value="P:isopentenyl diphosphate biosynthetic process, methylerythritol 4-phosphate pathway"/>
    <property type="evidence" value="ECO:0007669"/>
    <property type="project" value="UniProtKB-UniRule"/>
</dbReference>
<dbReference type="GO" id="GO:0016114">
    <property type="term" value="P:terpenoid biosynthetic process"/>
    <property type="evidence" value="ECO:0007669"/>
    <property type="project" value="InterPro"/>
</dbReference>
<dbReference type="FunFam" id="3.20.20.20:FF:000001">
    <property type="entry name" value="4-hydroxy-3-methylbut-2-en-1-yl diphosphate synthase (flavodoxin)"/>
    <property type="match status" value="1"/>
</dbReference>
<dbReference type="FunFam" id="3.30.413.10:FF:000002">
    <property type="entry name" value="4-hydroxy-3-methylbut-2-en-1-yl diphosphate synthase (flavodoxin)"/>
    <property type="match status" value="1"/>
</dbReference>
<dbReference type="Gene3D" id="3.20.20.20">
    <property type="entry name" value="Dihydropteroate synthase-like"/>
    <property type="match status" value="1"/>
</dbReference>
<dbReference type="Gene3D" id="3.30.413.10">
    <property type="entry name" value="Sulfite Reductase Hemoprotein, domain 1"/>
    <property type="match status" value="1"/>
</dbReference>
<dbReference type="HAMAP" id="MF_00159">
    <property type="entry name" value="IspG"/>
    <property type="match status" value="1"/>
</dbReference>
<dbReference type="InterPro" id="IPR011005">
    <property type="entry name" value="Dihydropteroate_synth-like_sf"/>
</dbReference>
<dbReference type="InterPro" id="IPR036849">
    <property type="entry name" value="Enolase-like_C_sf"/>
</dbReference>
<dbReference type="InterPro" id="IPR016425">
    <property type="entry name" value="IspG_bac"/>
</dbReference>
<dbReference type="InterPro" id="IPR004588">
    <property type="entry name" value="IspG_bac-typ"/>
</dbReference>
<dbReference type="InterPro" id="IPR045854">
    <property type="entry name" value="NO2/SO3_Rdtase_4Fe4S_sf"/>
</dbReference>
<dbReference type="NCBIfam" id="TIGR00612">
    <property type="entry name" value="ispG_gcpE"/>
    <property type="match status" value="1"/>
</dbReference>
<dbReference type="NCBIfam" id="NF001540">
    <property type="entry name" value="PRK00366.1"/>
    <property type="match status" value="1"/>
</dbReference>
<dbReference type="PANTHER" id="PTHR30454">
    <property type="entry name" value="4-HYDROXY-3-METHYLBUT-2-EN-1-YL DIPHOSPHATE SYNTHASE"/>
    <property type="match status" value="1"/>
</dbReference>
<dbReference type="PANTHER" id="PTHR30454:SF0">
    <property type="entry name" value="4-HYDROXY-3-METHYLBUT-2-EN-1-YL DIPHOSPHATE SYNTHASE (FERREDOXIN), CHLOROPLASTIC"/>
    <property type="match status" value="1"/>
</dbReference>
<dbReference type="Pfam" id="PF04551">
    <property type="entry name" value="GcpE"/>
    <property type="match status" value="1"/>
</dbReference>
<dbReference type="PIRSF" id="PIRSF004640">
    <property type="entry name" value="IspG"/>
    <property type="match status" value="1"/>
</dbReference>
<dbReference type="SUPFAM" id="SSF51604">
    <property type="entry name" value="Enolase C-terminal domain-like"/>
    <property type="match status" value="1"/>
</dbReference>
<dbReference type="SUPFAM" id="SSF56014">
    <property type="entry name" value="Nitrite and sulphite reductase 4Fe-4S domain-like"/>
    <property type="match status" value="1"/>
</dbReference>
<reference key="1">
    <citation type="journal article" date="1997" name="J. Bacteriol.">
        <title>aarC, an essential gene involved in density-dependent regulation of the 2'-N-acetyltransferase in Providencia stuartii.</title>
        <authorList>
            <person name="Rather P.N."/>
            <person name="Solinsky K.A."/>
            <person name="Paradise M.R."/>
            <person name="Parojcic M.M."/>
        </authorList>
    </citation>
    <scope>NUCLEOTIDE SEQUENCE [GENOMIC DNA]</scope>
    <source>
        <strain>PR50</strain>
    </source>
</reference>
<organism>
    <name type="scientific">Providencia stuartii</name>
    <dbReference type="NCBI Taxonomy" id="588"/>
    <lineage>
        <taxon>Bacteria</taxon>
        <taxon>Pseudomonadati</taxon>
        <taxon>Pseudomonadota</taxon>
        <taxon>Gammaproteobacteria</taxon>
        <taxon>Enterobacterales</taxon>
        <taxon>Morganellaceae</taxon>
        <taxon>Providencia</taxon>
    </lineage>
</organism>
<gene>
    <name evidence="1" type="primary">ispG</name>
    <name type="synonym">aarC</name>
</gene>
<sequence>MHNESPIKRRKSTRIYVGNVPIGDGAPIAVQSMTNTRTTDVEATVRQIQSLERVGVDIVRVSVPTMDAAEAFKLIKQRVNVPLVADIHFDYRIAMKVAEYGVDCLRINPGNIGSEERIRQVVDSARHHNIPIRIGVNGGSLEKDIQEKYGEPTPEALVESAMRHVDILDRLNFDQFKVSVKASDVFLAVGSYRLLAQKIDQPLHLGITEAGGARSGSVKSAIGLGMLLAEGIGDTLRISLAADPVEEVKVGFDILKSLRIRSRGINFIACPTCSRQEFDVIGTVNALEQRLEDIITPMDVSIIGCVVNGPGEAEVSTLGVAGAKTKSGFYEDGVRKKERFDNDNIIDQLEAKIRAKAAMLDEITV</sequence>
<accession>P72241</accession>
<name>ISPG_PROST</name>
<evidence type="ECO:0000255" key="1">
    <source>
        <dbReference type="HAMAP-Rule" id="MF_00159"/>
    </source>
</evidence>
<evidence type="ECO:0000269" key="2">
    <source>
    </source>
</evidence>
<comment type="function">
    <text evidence="1 2">Converts 2C-methyl-D-erythritol 2,4-cyclodiphosphate (ME-2,4cPP) into 1-hydroxy-2-methyl-2-(E)-butenyl 4-diphosphate (By similarity). Involved in density-dependent regulation of 2'-N-acetyltransferase (PubMed:9079912).</text>
</comment>
<comment type="catalytic activity">
    <reaction>
        <text>(2E)-4-hydroxy-3-methylbut-2-enyl diphosphate + 2 oxidized [2Fe-2S]-[ferredoxin] + H2O = 2-C-methyl-D-erythritol 2,4-cyclic diphosphate + 2 reduced [2Fe-2S]-[ferredoxin] + H(+)</text>
        <dbReference type="Rhea" id="RHEA:26119"/>
        <dbReference type="Rhea" id="RHEA-COMP:10000"/>
        <dbReference type="Rhea" id="RHEA-COMP:10001"/>
        <dbReference type="ChEBI" id="CHEBI:15377"/>
        <dbReference type="ChEBI" id="CHEBI:15378"/>
        <dbReference type="ChEBI" id="CHEBI:33737"/>
        <dbReference type="ChEBI" id="CHEBI:33738"/>
        <dbReference type="ChEBI" id="CHEBI:58483"/>
        <dbReference type="ChEBI" id="CHEBI:128753"/>
    </reaction>
</comment>
<comment type="catalytic activity">
    <reaction evidence="1">
        <text>(2E)-4-hydroxy-3-methylbut-2-enyl diphosphate + oxidized [flavodoxin] + H2O + 2 H(+) = 2-C-methyl-D-erythritol 2,4-cyclic diphosphate + reduced [flavodoxin]</text>
        <dbReference type="Rhea" id="RHEA:43604"/>
        <dbReference type="Rhea" id="RHEA-COMP:10622"/>
        <dbReference type="Rhea" id="RHEA-COMP:10623"/>
        <dbReference type="ChEBI" id="CHEBI:15377"/>
        <dbReference type="ChEBI" id="CHEBI:15378"/>
        <dbReference type="ChEBI" id="CHEBI:57618"/>
        <dbReference type="ChEBI" id="CHEBI:58210"/>
        <dbReference type="ChEBI" id="CHEBI:58483"/>
        <dbReference type="ChEBI" id="CHEBI:128753"/>
        <dbReference type="EC" id="1.17.7.3"/>
    </reaction>
</comment>
<comment type="cofactor">
    <cofactor evidence="1">
        <name>[4Fe-4S] cluster</name>
        <dbReference type="ChEBI" id="CHEBI:49883"/>
    </cofactor>
    <text evidence="1">Binds 1 [4Fe-4S] cluster.</text>
</comment>
<comment type="pathway">
    <text evidence="1">Isoprenoid biosynthesis; isopentenyl diphosphate biosynthesis via DXP pathway; isopentenyl diphosphate from 1-deoxy-D-xylulose 5-phosphate: step 5/6.</text>
</comment>
<comment type="similarity">
    <text evidence="1">Belongs to the IspG family.</text>
</comment>
<feature type="chain" id="PRO_0000190617" description="4-hydroxy-3-methylbut-2-en-1-yl diphosphate synthase (flavodoxin)">
    <location>
        <begin position="1"/>
        <end position="365"/>
    </location>
</feature>
<feature type="binding site" evidence="1">
    <location>
        <position position="270"/>
    </location>
    <ligand>
        <name>[4Fe-4S] cluster</name>
        <dbReference type="ChEBI" id="CHEBI:49883"/>
    </ligand>
</feature>
<feature type="binding site" evidence="1">
    <location>
        <position position="273"/>
    </location>
    <ligand>
        <name>[4Fe-4S] cluster</name>
        <dbReference type="ChEBI" id="CHEBI:49883"/>
    </ligand>
</feature>
<feature type="binding site" evidence="1">
    <location>
        <position position="305"/>
    </location>
    <ligand>
        <name>[4Fe-4S] cluster</name>
        <dbReference type="ChEBI" id="CHEBI:49883"/>
    </ligand>
</feature>
<feature type="binding site" evidence="1">
    <location>
        <position position="312"/>
    </location>
    <ligand>
        <name>[4Fe-4S] cluster</name>
        <dbReference type="ChEBI" id="CHEBI:49883"/>
    </ligand>
</feature>